<dbReference type="EMBL" id="AY660566">
    <property type="protein sequence ID" value="AAT80708.1"/>
    <property type="molecule type" value="Genomic_DNA"/>
</dbReference>
<dbReference type="RefSeq" id="YP_209514.1">
    <property type="nucleotide sequence ID" value="NC_006861.1"/>
</dbReference>
<dbReference type="SMR" id="Q5SD41"/>
<dbReference type="GeneID" id="3283808"/>
<dbReference type="GO" id="GO:0009535">
    <property type="term" value="C:chloroplast thylakoid membrane"/>
    <property type="evidence" value="ECO:0007669"/>
    <property type="project" value="UniProtKB-SubCell"/>
</dbReference>
<dbReference type="GO" id="GO:0009539">
    <property type="term" value="C:photosystem II reaction center"/>
    <property type="evidence" value="ECO:0007669"/>
    <property type="project" value="InterPro"/>
</dbReference>
<dbReference type="GO" id="GO:0015979">
    <property type="term" value="P:photosynthesis"/>
    <property type="evidence" value="ECO:0007669"/>
    <property type="project" value="UniProtKB-UniRule"/>
</dbReference>
<dbReference type="HAMAP" id="MF_01317">
    <property type="entry name" value="PSII_PsbL"/>
    <property type="match status" value="1"/>
</dbReference>
<dbReference type="InterPro" id="IPR003372">
    <property type="entry name" value="PSII_PsbL"/>
</dbReference>
<dbReference type="InterPro" id="IPR037266">
    <property type="entry name" value="PSII_PsbL_sf"/>
</dbReference>
<dbReference type="NCBIfam" id="NF001972">
    <property type="entry name" value="PRK00753.1"/>
    <property type="match status" value="1"/>
</dbReference>
<dbReference type="Pfam" id="PF02419">
    <property type="entry name" value="PsbL"/>
    <property type="match status" value="1"/>
</dbReference>
<dbReference type="SUPFAM" id="SSF161017">
    <property type="entry name" value="Photosystem II reaction center protein L, PsbL"/>
    <property type="match status" value="1"/>
</dbReference>
<evidence type="ECO:0000255" key="1">
    <source>
        <dbReference type="HAMAP-Rule" id="MF_01317"/>
    </source>
</evidence>
<name>PSBL_HUPLU</name>
<protein>
    <recommendedName>
        <fullName evidence="1">Photosystem II reaction center protein L</fullName>
        <shortName evidence="1">PSII-L</shortName>
    </recommendedName>
</protein>
<keyword id="KW-0150">Chloroplast</keyword>
<keyword id="KW-0472">Membrane</keyword>
<keyword id="KW-0602">Photosynthesis</keyword>
<keyword id="KW-0604">Photosystem II</keyword>
<keyword id="KW-0934">Plastid</keyword>
<keyword id="KW-0674">Reaction center</keyword>
<keyword id="KW-0793">Thylakoid</keyword>
<keyword id="KW-0812">Transmembrane</keyword>
<keyword id="KW-1133">Transmembrane helix</keyword>
<accession>Q5SD41</accession>
<proteinExistence type="inferred from homology"/>
<feature type="chain" id="PRO_0000219722" description="Photosystem II reaction center protein L">
    <location>
        <begin position="1"/>
        <end position="38"/>
    </location>
</feature>
<feature type="transmembrane region" description="Helical" evidence="1">
    <location>
        <begin position="17"/>
        <end position="37"/>
    </location>
</feature>
<gene>
    <name evidence="1" type="primary">psbL</name>
</gene>
<geneLocation type="chloroplast"/>
<organism>
    <name type="scientific">Huperzia lucidula</name>
    <name type="common">Shining clubmoss</name>
    <name type="synonym">Lycopodium lucidulum</name>
    <dbReference type="NCBI Taxonomy" id="37429"/>
    <lineage>
        <taxon>Eukaryota</taxon>
        <taxon>Viridiplantae</taxon>
        <taxon>Streptophyta</taxon>
        <taxon>Embryophyta</taxon>
        <taxon>Tracheophyta</taxon>
        <taxon>Lycopodiopsida</taxon>
        <taxon>Lycopodiales</taxon>
        <taxon>Lycopodiaceae</taxon>
        <taxon>Huperzioideae</taxon>
        <taxon>Huperzia</taxon>
    </lineage>
</organism>
<sequence>MTKPNPNKQSVELNRTSLYWGLLLIFVLAVLFSNYFFN</sequence>
<reference key="1">
    <citation type="journal article" date="2005" name="Gene">
        <title>The first complete chloroplast genome sequence of a lycophyte, Huperzia lucidula (Lycopodiaceae).</title>
        <authorList>
            <person name="Wolf P.G."/>
            <person name="Karol K.G."/>
            <person name="Mandoli D.F."/>
            <person name="Kuehl J.V."/>
            <person name="Arumuganathan K."/>
            <person name="Ellis M.W."/>
            <person name="Mishler B.D."/>
            <person name="Kelch D.G."/>
            <person name="Olmstead R.G."/>
            <person name="Boore J.L."/>
        </authorList>
    </citation>
    <scope>NUCLEOTIDE SEQUENCE [LARGE SCALE GENOMIC DNA]</scope>
</reference>
<comment type="function">
    <text evidence="1">One of the components of the core complex of photosystem II (PSII). PSII is a light-driven water:plastoquinone oxidoreductase that uses light energy to abstract electrons from H(2)O, generating O(2) and a proton gradient subsequently used for ATP formation. It consists of a core antenna complex that captures photons, and an electron transfer chain that converts photonic excitation into a charge separation. This subunit is found at the monomer-monomer interface and is required for correct PSII assembly and/or dimerization.</text>
</comment>
<comment type="subunit">
    <text evidence="1">PSII is composed of 1 copy each of membrane proteins PsbA, PsbB, PsbC, PsbD, PsbE, PsbF, PsbH, PsbI, PsbJ, PsbK, PsbL, PsbM, PsbT, PsbX, PsbY, PsbZ, Psb30/Ycf12, at least 3 peripheral proteins of the oxygen-evolving complex and a large number of cofactors. It forms dimeric complexes.</text>
</comment>
<comment type="subcellular location">
    <subcellularLocation>
        <location evidence="1">Plastid</location>
        <location evidence="1">Chloroplast thylakoid membrane</location>
        <topology evidence="1">Single-pass membrane protein</topology>
    </subcellularLocation>
</comment>
<comment type="similarity">
    <text evidence="1">Belongs to the PsbL family.</text>
</comment>